<dbReference type="EMBL" id="CP001172">
    <property type="protein sequence ID" value="ACJ56145.1"/>
    <property type="molecule type" value="Genomic_DNA"/>
</dbReference>
<dbReference type="RefSeq" id="WP_001216380.1">
    <property type="nucleotide sequence ID" value="NZ_CP001172.1"/>
</dbReference>
<dbReference type="SMR" id="B7GW28"/>
<dbReference type="GeneID" id="92895291"/>
<dbReference type="HOGENOM" id="CLU_074407_2_0_6"/>
<dbReference type="Proteomes" id="UP000006924">
    <property type="component" value="Chromosome"/>
</dbReference>
<dbReference type="GO" id="GO:0022625">
    <property type="term" value="C:cytosolic large ribosomal subunit"/>
    <property type="evidence" value="ECO:0007669"/>
    <property type="project" value="TreeGrafter"/>
</dbReference>
<dbReference type="GO" id="GO:0003735">
    <property type="term" value="F:structural constituent of ribosome"/>
    <property type="evidence" value="ECO:0007669"/>
    <property type="project" value="InterPro"/>
</dbReference>
<dbReference type="GO" id="GO:0006412">
    <property type="term" value="P:translation"/>
    <property type="evidence" value="ECO:0007669"/>
    <property type="project" value="UniProtKB-UniRule"/>
</dbReference>
<dbReference type="FunFam" id="3.90.1030.10:FF:000001">
    <property type="entry name" value="50S ribosomal protein L17"/>
    <property type="match status" value="1"/>
</dbReference>
<dbReference type="Gene3D" id="3.90.1030.10">
    <property type="entry name" value="Ribosomal protein L17"/>
    <property type="match status" value="1"/>
</dbReference>
<dbReference type="HAMAP" id="MF_01368">
    <property type="entry name" value="Ribosomal_bL17"/>
    <property type="match status" value="1"/>
</dbReference>
<dbReference type="InterPro" id="IPR000456">
    <property type="entry name" value="Ribosomal_bL17"/>
</dbReference>
<dbReference type="InterPro" id="IPR047859">
    <property type="entry name" value="Ribosomal_bL17_CS"/>
</dbReference>
<dbReference type="InterPro" id="IPR036373">
    <property type="entry name" value="Ribosomal_bL17_sf"/>
</dbReference>
<dbReference type="NCBIfam" id="TIGR00059">
    <property type="entry name" value="L17"/>
    <property type="match status" value="1"/>
</dbReference>
<dbReference type="PANTHER" id="PTHR14413:SF16">
    <property type="entry name" value="LARGE RIBOSOMAL SUBUNIT PROTEIN BL17M"/>
    <property type="match status" value="1"/>
</dbReference>
<dbReference type="PANTHER" id="PTHR14413">
    <property type="entry name" value="RIBOSOMAL PROTEIN L17"/>
    <property type="match status" value="1"/>
</dbReference>
<dbReference type="Pfam" id="PF01196">
    <property type="entry name" value="Ribosomal_L17"/>
    <property type="match status" value="1"/>
</dbReference>
<dbReference type="SUPFAM" id="SSF64263">
    <property type="entry name" value="Prokaryotic ribosomal protein L17"/>
    <property type="match status" value="1"/>
</dbReference>
<dbReference type="PROSITE" id="PS01167">
    <property type="entry name" value="RIBOSOMAL_L17"/>
    <property type="match status" value="1"/>
</dbReference>
<reference key="1">
    <citation type="journal article" date="2008" name="J. Bacteriol.">
        <title>Comparative genome sequence analysis of multidrug-resistant Acinetobacter baumannii.</title>
        <authorList>
            <person name="Adams M.D."/>
            <person name="Goglin K."/>
            <person name="Molyneaux N."/>
            <person name="Hujer K.M."/>
            <person name="Lavender H."/>
            <person name="Jamison J.J."/>
            <person name="MacDonald I.J."/>
            <person name="Martin K.M."/>
            <person name="Russo T."/>
            <person name="Campagnari A.A."/>
            <person name="Hujer A.M."/>
            <person name="Bonomo R.A."/>
            <person name="Gill S.R."/>
        </authorList>
    </citation>
    <scope>NUCLEOTIDE SEQUENCE [LARGE SCALE GENOMIC DNA]</scope>
    <source>
        <strain>AB307-0294</strain>
    </source>
</reference>
<keyword id="KW-0687">Ribonucleoprotein</keyword>
<keyword id="KW-0689">Ribosomal protein</keyword>
<evidence type="ECO:0000255" key="1">
    <source>
        <dbReference type="HAMAP-Rule" id="MF_01368"/>
    </source>
</evidence>
<evidence type="ECO:0000305" key="2"/>
<comment type="subunit">
    <text evidence="1">Part of the 50S ribosomal subunit. Contacts protein L32.</text>
</comment>
<comment type="similarity">
    <text evidence="1">Belongs to the bacterial ribosomal protein bL17 family.</text>
</comment>
<protein>
    <recommendedName>
        <fullName evidence="1">Large ribosomal subunit protein bL17</fullName>
    </recommendedName>
    <alternativeName>
        <fullName evidence="2">50S ribosomal protein L17</fullName>
    </alternativeName>
</protein>
<accession>B7GW28</accession>
<feature type="chain" id="PRO_1000144358" description="Large ribosomal subunit protein bL17">
    <location>
        <begin position="1"/>
        <end position="125"/>
    </location>
</feature>
<sequence length="125" mass="13994">MRHRNSGVKLGRTSSHRKAMFQNLANSLFEHELIKTTLPKAKELRRVAEPLITLAKNDTVANRRLAFARTRNAATVGKLFTVLGPRYKERNGGYLRVLKAGFRAGDAAPMAYVELVDREVNTSAE</sequence>
<proteinExistence type="inferred from homology"/>
<organism>
    <name type="scientific">Acinetobacter baumannii (strain AB307-0294)</name>
    <dbReference type="NCBI Taxonomy" id="557600"/>
    <lineage>
        <taxon>Bacteria</taxon>
        <taxon>Pseudomonadati</taxon>
        <taxon>Pseudomonadota</taxon>
        <taxon>Gammaproteobacteria</taxon>
        <taxon>Moraxellales</taxon>
        <taxon>Moraxellaceae</taxon>
        <taxon>Acinetobacter</taxon>
        <taxon>Acinetobacter calcoaceticus/baumannii complex</taxon>
    </lineage>
</organism>
<name>RL17_ACIB3</name>
<gene>
    <name evidence="1" type="primary">rplQ</name>
    <name type="ordered locus">ABBFA_000458</name>
</gene>